<feature type="signal peptide" evidence="2">
    <location>
        <begin position="1"/>
        <end position="21"/>
    </location>
</feature>
<feature type="chain" id="PRO_0000041828" description="Beta-2-microglobulin">
    <location>
        <begin position="22"/>
        <end position="118"/>
    </location>
</feature>
<feature type="domain" description="Ig-like C1-type">
    <location>
        <begin position="26"/>
        <end position="113"/>
    </location>
</feature>
<feature type="disulfide bond" evidence="3">
    <location>
        <begin position="46"/>
        <end position="101"/>
    </location>
</feature>
<accession>Q864T6</accession>
<gene>
    <name type="primary">B2M</name>
</gene>
<comment type="function">
    <text evidence="1">Component of the class I major histocompatibility complex (MHC). Involved in the presentation of peptide antigens to the immune system (By similarity).</text>
</comment>
<comment type="subunit">
    <text evidence="1">Heterodimer of an alpha chain and a beta chain. Beta-2-microglobulin is the beta-chain of major histocompatibility complex class I molecules (By similarity).</text>
</comment>
<comment type="subcellular location">
    <subcellularLocation>
        <location evidence="1">Secreted</location>
    </subcellularLocation>
</comment>
<comment type="similarity">
    <text evidence="4">Belongs to the beta-2-microglobulin family.</text>
</comment>
<sequence length="118" mass="13586">MESRWGIVVIGLLCCVSWVEAITSSPKIQVYTRSPAENGKHNHLNCYVSSFHPPQITIRLLRNGEEMPNVERSDLSFSNDWTFHRLVHTGFVPNDKDVFECEVTHNSVTKSVKWDRDN</sequence>
<evidence type="ECO:0000250" key="1"/>
<evidence type="ECO:0000255" key="2"/>
<evidence type="ECO:0000255" key="3">
    <source>
        <dbReference type="PROSITE-ProRule" id="PRU00114"/>
    </source>
</evidence>
<evidence type="ECO:0000305" key="4"/>
<name>B2MG_TACAC</name>
<proteinExistence type="inferred from homology"/>
<reference key="1">
    <citation type="journal article" date="2003" name="Dev. Comp. Immunol.">
        <title>Characterization of beta(2)-microglobulin coding sequence from three non-placental mammals: the duckbill platypus, the short-beaked echidna, and the grey short-tailed opossum.</title>
        <authorList>
            <person name="Miska K.B."/>
            <person name="Hellman L."/>
            <person name="Miller R.D."/>
        </authorList>
    </citation>
    <scope>NUCLEOTIDE SEQUENCE [MRNA]</scope>
</reference>
<protein>
    <recommendedName>
        <fullName>Beta-2-microglobulin</fullName>
    </recommendedName>
</protein>
<organism>
    <name type="scientific">Tachyglossus aculeatus aculeatus</name>
    <name type="common">Southeast Australian short-beaked echidna</name>
    <dbReference type="NCBI Taxonomy" id="49271"/>
    <lineage>
        <taxon>Eukaryota</taxon>
        <taxon>Metazoa</taxon>
        <taxon>Chordata</taxon>
        <taxon>Craniata</taxon>
        <taxon>Vertebrata</taxon>
        <taxon>Euteleostomi</taxon>
        <taxon>Mammalia</taxon>
        <taxon>Monotremata</taxon>
        <taxon>Tachyglossidae</taxon>
        <taxon>Tachyglossus</taxon>
    </lineage>
</organism>
<dbReference type="EMBL" id="AY125949">
    <property type="protein sequence ID" value="AAM98338.1"/>
    <property type="molecule type" value="mRNA"/>
</dbReference>
<dbReference type="SMR" id="Q864T6"/>
<dbReference type="GO" id="GO:0005576">
    <property type="term" value="C:extracellular region"/>
    <property type="evidence" value="ECO:0007669"/>
    <property type="project" value="UniProtKB-SubCell"/>
</dbReference>
<dbReference type="GO" id="GO:0042612">
    <property type="term" value="C:MHC class I protein complex"/>
    <property type="evidence" value="ECO:0007669"/>
    <property type="project" value="UniProtKB-KW"/>
</dbReference>
<dbReference type="GO" id="GO:0002474">
    <property type="term" value="P:antigen processing and presentation of peptide antigen via MHC class I"/>
    <property type="evidence" value="ECO:0007669"/>
    <property type="project" value="UniProtKB-KW"/>
</dbReference>
<dbReference type="FunFam" id="2.60.40.10:FF:001005">
    <property type="entry name" value="Beta-2-microglobulin"/>
    <property type="match status" value="1"/>
</dbReference>
<dbReference type="Gene3D" id="2.60.40.10">
    <property type="entry name" value="Immunoglobulins"/>
    <property type="match status" value="1"/>
</dbReference>
<dbReference type="InterPro" id="IPR007110">
    <property type="entry name" value="Ig-like_dom"/>
</dbReference>
<dbReference type="InterPro" id="IPR036179">
    <property type="entry name" value="Ig-like_dom_sf"/>
</dbReference>
<dbReference type="InterPro" id="IPR013783">
    <property type="entry name" value="Ig-like_fold"/>
</dbReference>
<dbReference type="InterPro" id="IPR003006">
    <property type="entry name" value="Ig/MHC_CS"/>
</dbReference>
<dbReference type="InterPro" id="IPR003597">
    <property type="entry name" value="Ig_C1-set"/>
</dbReference>
<dbReference type="InterPro" id="IPR050160">
    <property type="entry name" value="MHC/Immunoglobulin"/>
</dbReference>
<dbReference type="PANTHER" id="PTHR19944:SF62">
    <property type="entry name" value="BETA-2-MICROGLOBULIN"/>
    <property type="match status" value="1"/>
</dbReference>
<dbReference type="PANTHER" id="PTHR19944">
    <property type="entry name" value="MHC CLASS II-RELATED"/>
    <property type="match status" value="1"/>
</dbReference>
<dbReference type="Pfam" id="PF07654">
    <property type="entry name" value="C1-set"/>
    <property type="match status" value="1"/>
</dbReference>
<dbReference type="SMART" id="SM00407">
    <property type="entry name" value="IGc1"/>
    <property type="match status" value="1"/>
</dbReference>
<dbReference type="SUPFAM" id="SSF48726">
    <property type="entry name" value="Immunoglobulin"/>
    <property type="match status" value="1"/>
</dbReference>
<dbReference type="PROSITE" id="PS50835">
    <property type="entry name" value="IG_LIKE"/>
    <property type="match status" value="1"/>
</dbReference>
<dbReference type="PROSITE" id="PS00290">
    <property type="entry name" value="IG_MHC"/>
    <property type="match status" value="1"/>
</dbReference>
<keyword id="KW-1015">Disulfide bond</keyword>
<keyword id="KW-0391">Immunity</keyword>
<keyword id="KW-0393">Immunoglobulin domain</keyword>
<keyword id="KW-0490">MHC I</keyword>
<keyword id="KW-0964">Secreted</keyword>
<keyword id="KW-0732">Signal</keyword>